<feature type="chain" id="PRO_0000120409" description="Glutamate-1-semialdehyde 2,1-aminomutase">
    <location>
        <begin position="1"/>
        <end position="426"/>
    </location>
</feature>
<feature type="modified residue" description="N6-(pyridoxal phosphate)lysine" evidence="1">
    <location>
        <position position="265"/>
    </location>
</feature>
<proteinExistence type="inferred from homology"/>
<sequence length="426" mass="45356">MSKSENLYSAARELIPGGVNSPVRAFTGVGGTPLFIEKADGAYLYDVDGKAYIDYVGSWGPMVLGHNHPAIRNAVIEAAERGLSFGAPTEMEVKMAQLVTELVPTMDMVRMVNSGTEATMSAIRLARGFTGRDKIIKFEGCYHGHADCLLVKAGSGALTLGQPNSPGVPADFAKHTLTCTYNDLASVRAAFEQYPQEIACIIVEPVAGNMNCVPPLPDFLPGLRALCDEFGALLIIDEVMTGFRVALAGAQDYYGVEPDLTCLGKIIGGGMPVGAFGGRRDVMDALAPTGPVYQAGTLSGNPIAMAAGFACLNEVAQPGVHETLDELTTRLAEGLLEAAEEAGIPLVVNHVGGMFGIFFTDAESVTCYQDVMACDVERFKRFFHMMLDEGVYLAPSAFEAGFMSVAHSMEDINNTIDAARRVFAKL</sequence>
<comment type="catalytic activity">
    <reaction evidence="1">
        <text>(S)-4-amino-5-oxopentanoate = 5-aminolevulinate</text>
        <dbReference type="Rhea" id="RHEA:14265"/>
        <dbReference type="ChEBI" id="CHEBI:57501"/>
        <dbReference type="ChEBI" id="CHEBI:356416"/>
        <dbReference type="EC" id="5.4.3.8"/>
    </reaction>
</comment>
<comment type="cofactor">
    <cofactor evidence="1">
        <name>pyridoxal 5'-phosphate</name>
        <dbReference type="ChEBI" id="CHEBI:597326"/>
    </cofactor>
</comment>
<comment type="pathway">
    <text evidence="1">Porphyrin-containing compound metabolism; protoporphyrin-IX biosynthesis; 5-aminolevulinate from L-glutamyl-tRNA(Glu): step 2/2.</text>
</comment>
<comment type="subunit">
    <text evidence="1">Homodimer.</text>
</comment>
<comment type="subcellular location">
    <subcellularLocation>
        <location evidence="1">Cytoplasm</location>
    </subcellularLocation>
</comment>
<comment type="similarity">
    <text evidence="1">Belongs to the class-III pyridoxal-phosphate-dependent aminotransferase family. HemL subfamily.</text>
</comment>
<accession>Q8X4V5</accession>
<reference key="1">
    <citation type="journal article" date="2001" name="Nature">
        <title>Genome sequence of enterohaemorrhagic Escherichia coli O157:H7.</title>
        <authorList>
            <person name="Perna N.T."/>
            <person name="Plunkett G. III"/>
            <person name="Burland V."/>
            <person name="Mau B."/>
            <person name="Glasner J.D."/>
            <person name="Rose D.J."/>
            <person name="Mayhew G.F."/>
            <person name="Evans P.S."/>
            <person name="Gregor J."/>
            <person name="Kirkpatrick H.A."/>
            <person name="Posfai G."/>
            <person name="Hackett J."/>
            <person name="Klink S."/>
            <person name="Boutin A."/>
            <person name="Shao Y."/>
            <person name="Miller L."/>
            <person name="Grotbeck E.J."/>
            <person name="Davis N.W."/>
            <person name="Lim A."/>
            <person name="Dimalanta E.T."/>
            <person name="Potamousis K."/>
            <person name="Apodaca J."/>
            <person name="Anantharaman T.S."/>
            <person name="Lin J."/>
            <person name="Yen G."/>
            <person name="Schwartz D.C."/>
            <person name="Welch R.A."/>
            <person name="Blattner F.R."/>
        </authorList>
    </citation>
    <scope>NUCLEOTIDE SEQUENCE [LARGE SCALE GENOMIC DNA]</scope>
    <source>
        <strain>O157:H7 / EDL933 / ATCC 700927 / EHEC</strain>
    </source>
</reference>
<reference key="2">
    <citation type="journal article" date="2001" name="DNA Res.">
        <title>Complete genome sequence of enterohemorrhagic Escherichia coli O157:H7 and genomic comparison with a laboratory strain K-12.</title>
        <authorList>
            <person name="Hayashi T."/>
            <person name="Makino K."/>
            <person name="Ohnishi M."/>
            <person name="Kurokawa K."/>
            <person name="Ishii K."/>
            <person name="Yokoyama K."/>
            <person name="Han C.-G."/>
            <person name="Ohtsubo E."/>
            <person name="Nakayama K."/>
            <person name="Murata T."/>
            <person name="Tanaka M."/>
            <person name="Tobe T."/>
            <person name="Iida T."/>
            <person name="Takami H."/>
            <person name="Honda T."/>
            <person name="Sasakawa C."/>
            <person name="Ogasawara N."/>
            <person name="Yasunaga T."/>
            <person name="Kuhara S."/>
            <person name="Shiba T."/>
            <person name="Hattori M."/>
            <person name="Shinagawa H."/>
        </authorList>
    </citation>
    <scope>NUCLEOTIDE SEQUENCE [LARGE SCALE GENOMIC DNA]</scope>
    <source>
        <strain>O157:H7 / Sakai / RIMD 0509952 / EHEC</strain>
    </source>
</reference>
<dbReference type="EC" id="5.4.3.8" evidence="1"/>
<dbReference type="EMBL" id="AE005174">
    <property type="protein sequence ID" value="AAG54458.1"/>
    <property type="molecule type" value="Genomic_DNA"/>
</dbReference>
<dbReference type="EMBL" id="BA000007">
    <property type="protein sequence ID" value="BAB33581.1"/>
    <property type="molecule type" value="Genomic_DNA"/>
</dbReference>
<dbReference type="PIR" id="F85499">
    <property type="entry name" value="F85499"/>
</dbReference>
<dbReference type="PIR" id="F90648">
    <property type="entry name" value="F90648"/>
</dbReference>
<dbReference type="RefSeq" id="NP_308185.1">
    <property type="nucleotide sequence ID" value="NC_002695.1"/>
</dbReference>
<dbReference type="RefSeq" id="WP_000045277.1">
    <property type="nucleotide sequence ID" value="NZ_VOAI01000002.1"/>
</dbReference>
<dbReference type="SMR" id="Q8X4V5"/>
<dbReference type="STRING" id="155864.Z0165"/>
<dbReference type="GeneID" id="913788"/>
<dbReference type="KEGG" id="ece:Z0165"/>
<dbReference type="KEGG" id="ecs:ECs_0158"/>
<dbReference type="PATRIC" id="fig|386585.9.peg.258"/>
<dbReference type="eggNOG" id="COG0001">
    <property type="taxonomic scope" value="Bacteria"/>
</dbReference>
<dbReference type="HOGENOM" id="CLU_016922_1_5_6"/>
<dbReference type="OMA" id="WGPLIFG"/>
<dbReference type="UniPathway" id="UPA00251">
    <property type="reaction ID" value="UER00317"/>
</dbReference>
<dbReference type="Proteomes" id="UP000000558">
    <property type="component" value="Chromosome"/>
</dbReference>
<dbReference type="Proteomes" id="UP000002519">
    <property type="component" value="Chromosome"/>
</dbReference>
<dbReference type="GO" id="GO:0005737">
    <property type="term" value="C:cytoplasm"/>
    <property type="evidence" value="ECO:0007669"/>
    <property type="project" value="UniProtKB-SubCell"/>
</dbReference>
<dbReference type="GO" id="GO:0042286">
    <property type="term" value="F:glutamate-1-semialdehyde 2,1-aminomutase activity"/>
    <property type="evidence" value="ECO:0007669"/>
    <property type="project" value="UniProtKB-UniRule"/>
</dbReference>
<dbReference type="GO" id="GO:0030170">
    <property type="term" value="F:pyridoxal phosphate binding"/>
    <property type="evidence" value="ECO:0007669"/>
    <property type="project" value="InterPro"/>
</dbReference>
<dbReference type="GO" id="GO:0008483">
    <property type="term" value="F:transaminase activity"/>
    <property type="evidence" value="ECO:0007669"/>
    <property type="project" value="InterPro"/>
</dbReference>
<dbReference type="GO" id="GO:0006782">
    <property type="term" value="P:protoporphyrinogen IX biosynthetic process"/>
    <property type="evidence" value="ECO:0007669"/>
    <property type="project" value="UniProtKB-UniRule"/>
</dbReference>
<dbReference type="CDD" id="cd00610">
    <property type="entry name" value="OAT_like"/>
    <property type="match status" value="1"/>
</dbReference>
<dbReference type="FunFam" id="3.40.640.10:FF:000021">
    <property type="entry name" value="Glutamate-1-semialdehyde 2,1-aminomutase"/>
    <property type="match status" value="1"/>
</dbReference>
<dbReference type="FunFam" id="3.90.1150.10:FF:000012">
    <property type="entry name" value="Glutamate-1-semialdehyde 2,1-aminomutase"/>
    <property type="match status" value="1"/>
</dbReference>
<dbReference type="Gene3D" id="3.90.1150.10">
    <property type="entry name" value="Aspartate Aminotransferase, domain 1"/>
    <property type="match status" value="1"/>
</dbReference>
<dbReference type="Gene3D" id="3.40.640.10">
    <property type="entry name" value="Type I PLP-dependent aspartate aminotransferase-like (Major domain)"/>
    <property type="match status" value="1"/>
</dbReference>
<dbReference type="HAMAP" id="MF_00375">
    <property type="entry name" value="HemL_aminotrans_3"/>
    <property type="match status" value="1"/>
</dbReference>
<dbReference type="InterPro" id="IPR004639">
    <property type="entry name" value="4pyrrol_synth_GluAld_NH2Trfase"/>
</dbReference>
<dbReference type="InterPro" id="IPR005814">
    <property type="entry name" value="Aminotrans_3"/>
</dbReference>
<dbReference type="InterPro" id="IPR049704">
    <property type="entry name" value="Aminotrans_3_PPA_site"/>
</dbReference>
<dbReference type="InterPro" id="IPR015424">
    <property type="entry name" value="PyrdxlP-dep_Trfase"/>
</dbReference>
<dbReference type="InterPro" id="IPR015421">
    <property type="entry name" value="PyrdxlP-dep_Trfase_major"/>
</dbReference>
<dbReference type="InterPro" id="IPR015422">
    <property type="entry name" value="PyrdxlP-dep_Trfase_small"/>
</dbReference>
<dbReference type="NCBIfam" id="TIGR00713">
    <property type="entry name" value="hemL"/>
    <property type="match status" value="1"/>
</dbReference>
<dbReference type="NCBIfam" id="NF000818">
    <property type="entry name" value="PRK00062.1"/>
    <property type="match status" value="1"/>
</dbReference>
<dbReference type="PANTHER" id="PTHR43713">
    <property type="entry name" value="GLUTAMATE-1-SEMIALDEHYDE 2,1-AMINOMUTASE"/>
    <property type="match status" value="1"/>
</dbReference>
<dbReference type="PANTHER" id="PTHR43713:SF3">
    <property type="entry name" value="GLUTAMATE-1-SEMIALDEHYDE 2,1-AMINOMUTASE 1, CHLOROPLASTIC-RELATED"/>
    <property type="match status" value="1"/>
</dbReference>
<dbReference type="Pfam" id="PF00202">
    <property type="entry name" value="Aminotran_3"/>
    <property type="match status" value="1"/>
</dbReference>
<dbReference type="SUPFAM" id="SSF53383">
    <property type="entry name" value="PLP-dependent transferases"/>
    <property type="match status" value="1"/>
</dbReference>
<dbReference type="PROSITE" id="PS00600">
    <property type="entry name" value="AA_TRANSFER_CLASS_3"/>
    <property type="match status" value="1"/>
</dbReference>
<name>GSA_ECO57</name>
<gene>
    <name evidence="1" type="primary">hemL</name>
    <name type="synonym">gsa</name>
    <name type="synonym">popC</name>
    <name type="ordered locus">Z0165</name>
    <name type="ordered locus">ECs0158</name>
</gene>
<keyword id="KW-0963">Cytoplasm</keyword>
<keyword id="KW-0413">Isomerase</keyword>
<keyword id="KW-0627">Porphyrin biosynthesis</keyword>
<keyword id="KW-0663">Pyridoxal phosphate</keyword>
<keyword id="KW-1185">Reference proteome</keyword>
<organism>
    <name type="scientific">Escherichia coli O157:H7</name>
    <dbReference type="NCBI Taxonomy" id="83334"/>
    <lineage>
        <taxon>Bacteria</taxon>
        <taxon>Pseudomonadati</taxon>
        <taxon>Pseudomonadota</taxon>
        <taxon>Gammaproteobacteria</taxon>
        <taxon>Enterobacterales</taxon>
        <taxon>Enterobacteriaceae</taxon>
        <taxon>Escherichia</taxon>
    </lineage>
</organism>
<evidence type="ECO:0000255" key="1">
    <source>
        <dbReference type="HAMAP-Rule" id="MF_00375"/>
    </source>
</evidence>
<protein>
    <recommendedName>
        <fullName evidence="1">Glutamate-1-semialdehyde 2,1-aminomutase</fullName>
        <shortName evidence="1">GSA</shortName>
        <ecNumber evidence="1">5.4.3.8</ecNumber>
    </recommendedName>
    <alternativeName>
        <fullName evidence="1">Glutamate-1-semialdehyde aminotransferase</fullName>
        <shortName evidence="1">GSA-AT</shortName>
    </alternativeName>
</protein>